<reference key="1">
    <citation type="journal article" date="2005" name="Genome Res.">
        <title>The Chlamydophila abortus genome sequence reveals an array of variable proteins that contribute to interspecies variation.</title>
        <authorList>
            <person name="Thomson N.R."/>
            <person name="Yeats C."/>
            <person name="Bell K."/>
            <person name="Holden M.T.G."/>
            <person name="Bentley S.D."/>
            <person name="Livingstone M."/>
            <person name="Cerdeno-Tarraga A.-M."/>
            <person name="Harris B."/>
            <person name="Doggett J."/>
            <person name="Ormond D."/>
            <person name="Mungall K."/>
            <person name="Clarke K."/>
            <person name="Feltwell T."/>
            <person name="Hance Z."/>
            <person name="Sanders M."/>
            <person name="Quail M.A."/>
            <person name="Price C."/>
            <person name="Barrell B.G."/>
            <person name="Parkhill J."/>
            <person name="Longbottom D."/>
        </authorList>
    </citation>
    <scope>NUCLEOTIDE SEQUENCE [LARGE SCALE GENOMIC DNA]</scope>
    <source>
        <strain>DSM 27085 / S26/3</strain>
    </source>
</reference>
<keyword id="KW-0028">Amino-acid biosynthesis</keyword>
<keyword id="KW-0057">Aromatic amino acid biosynthesis</keyword>
<keyword id="KW-0963">Cytoplasm</keyword>
<keyword id="KW-0808">Transferase</keyword>
<evidence type="ECO:0000255" key="1">
    <source>
        <dbReference type="HAMAP-Rule" id="MF_00210"/>
    </source>
</evidence>
<comment type="function">
    <text evidence="1">Catalyzes the transfer of the enolpyruvyl moiety of phosphoenolpyruvate (PEP) to the 5-hydroxyl of shikimate-3-phosphate (S3P) to produce enolpyruvyl shikimate-3-phosphate and inorganic phosphate.</text>
</comment>
<comment type="catalytic activity">
    <reaction evidence="1">
        <text>3-phosphoshikimate + phosphoenolpyruvate = 5-O-(1-carboxyvinyl)-3-phosphoshikimate + phosphate</text>
        <dbReference type="Rhea" id="RHEA:21256"/>
        <dbReference type="ChEBI" id="CHEBI:43474"/>
        <dbReference type="ChEBI" id="CHEBI:57701"/>
        <dbReference type="ChEBI" id="CHEBI:58702"/>
        <dbReference type="ChEBI" id="CHEBI:145989"/>
        <dbReference type="EC" id="2.5.1.19"/>
    </reaction>
    <physiologicalReaction direction="left-to-right" evidence="1">
        <dbReference type="Rhea" id="RHEA:21257"/>
    </physiologicalReaction>
</comment>
<comment type="pathway">
    <text evidence="1">Metabolic intermediate biosynthesis; chorismate biosynthesis; chorismate from D-erythrose 4-phosphate and phosphoenolpyruvate: step 6/7.</text>
</comment>
<comment type="subunit">
    <text evidence="1">Monomer.</text>
</comment>
<comment type="subcellular location">
    <subcellularLocation>
        <location evidence="1">Cytoplasm</location>
    </subcellularLocation>
</comment>
<comment type="similarity">
    <text evidence="1">Belongs to the EPSP synthase family.</text>
</comment>
<sequence>MLAYKISPSSISGRVSVPPSKSHTLRAIFWASVAQGTSIIHHALASPDSEAMIQACKQLGAKILKKSTHLEITGTPHLILPKNTTINAGSSGIVFRFFTALAAIFSEKITITESSQLQRRPIAPLIQALENFGATFSYEGEPYSLPFSVLGPMSSGYTEVIGEDSQYASALAIACSLAEGPFSFTILNPKERPWFALTLWWLDFLGIPYAQSEDTYSFEGKTRPQAFSYTVGGDFSSAAFLAAAALLSQSPHPTYLENLNIDDIQGDKELFFLLKKLGANITFENNTIIIFPSTFSGGNIDMDPFIDALPILAVLCCFATSSSYLYNARSAKNKESDRIIAITQELQKMGACIQPCHDGLLINPSPLYGASMHSHKDHRIAMALSIAAMHASGDSIIYDTDCVKKTFPNFIQILNSLHTNIQEHYEHISLRPADSRQDVVWQGSR</sequence>
<accession>Q5L5F4</accession>
<gene>
    <name evidence="1" type="primary">aroA</name>
    <name type="ordered locus">CAB690</name>
</gene>
<protein>
    <recommendedName>
        <fullName evidence="1">3-phosphoshikimate 1-carboxyvinyltransferase</fullName>
        <ecNumber evidence="1">2.5.1.19</ecNumber>
    </recommendedName>
    <alternativeName>
        <fullName evidence="1">5-enolpyruvylshikimate-3-phosphate synthase</fullName>
        <shortName evidence="1">EPSP synthase</shortName>
        <shortName evidence="1">EPSPS</shortName>
    </alternativeName>
</protein>
<proteinExistence type="inferred from homology"/>
<feature type="chain" id="PRO_1000012424" description="3-phosphoshikimate 1-carboxyvinyltransferase">
    <location>
        <begin position="1"/>
        <end position="445"/>
    </location>
</feature>
<feature type="active site" description="Proton acceptor" evidence="1">
    <location>
        <position position="307"/>
    </location>
</feature>
<feature type="binding site" evidence="1">
    <location>
        <position position="21"/>
    </location>
    <ligand>
        <name>3-phosphoshikimate</name>
        <dbReference type="ChEBI" id="CHEBI:145989"/>
    </ligand>
</feature>
<feature type="binding site" evidence="1">
    <location>
        <position position="21"/>
    </location>
    <ligand>
        <name>phosphoenolpyruvate</name>
        <dbReference type="ChEBI" id="CHEBI:58702"/>
    </ligand>
</feature>
<feature type="binding site" evidence="1">
    <location>
        <position position="22"/>
    </location>
    <ligand>
        <name>3-phosphoshikimate</name>
        <dbReference type="ChEBI" id="CHEBI:145989"/>
    </ligand>
</feature>
<feature type="binding site" evidence="1">
    <location>
        <position position="26"/>
    </location>
    <ligand>
        <name>3-phosphoshikimate</name>
        <dbReference type="ChEBI" id="CHEBI:145989"/>
    </ligand>
</feature>
<feature type="binding site" evidence="1">
    <location>
        <position position="92"/>
    </location>
    <ligand>
        <name>phosphoenolpyruvate</name>
        <dbReference type="ChEBI" id="CHEBI:58702"/>
    </ligand>
</feature>
<feature type="binding site" evidence="1">
    <location>
        <position position="120"/>
    </location>
    <ligand>
        <name>phosphoenolpyruvate</name>
        <dbReference type="ChEBI" id="CHEBI:58702"/>
    </ligand>
</feature>
<feature type="binding site" evidence="1">
    <location>
        <position position="165"/>
    </location>
    <ligand>
        <name>3-phosphoshikimate</name>
        <dbReference type="ChEBI" id="CHEBI:145989"/>
    </ligand>
</feature>
<feature type="binding site" evidence="1">
    <location>
        <position position="166"/>
    </location>
    <ligand>
        <name>3-phosphoshikimate</name>
        <dbReference type="ChEBI" id="CHEBI:145989"/>
    </ligand>
</feature>
<feature type="binding site" evidence="1">
    <location>
        <position position="166"/>
    </location>
    <ligand>
        <name>phosphoenolpyruvate</name>
        <dbReference type="ChEBI" id="CHEBI:58702"/>
    </ligand>
</feature>
<feature type="binding site" evidence="1">
    <location>
        <position position="307"/>
    </location>
    <ligand>
        <name>3-phosphoshikimate</name>
        <dbReference type="ChEBI" id="CHEBI:145989"/>
    </ligand>
</feature>
<feature type="binding site" evidence="1">
    <location>
        <position position="334"/>
    </location>
    <ligand>
        <name>3-phosphoshikimate</name>
        <dbReference type="ChEBI" id="CHEBI:145989"/>
    </ligand>
</feature>
<feature type="binding site" evidence="1">
    <location>
        <position position="338"/>
    </location>
    <ligand>
        <name>phosphoenolpyruvate</name>
        <dbReference type="ChEBI" id="CHEBI:58702"/>
    </ligand>
</feature>
<feature type="binding site" evidence="1">
    <location>
        <position position="379"/>
    </location>
    <ligand>
        <name>phosphoenolpyruvate</name>
        <dbReference type="ChEBI" id="CHEBI:58702"/>
    </ligand>
</feature>
<feature type="binding site" evidence="1">
    <location>
        <position position="405"/>
    </location>
    <ligand>
        <name>phosphoenolpyruvate</name>
        <dbReference type="ChEBI" id="CHEBI:58702"/>
    </ligand>
</feature>
<dbReference type="EC" id="2.5.1.19" evidence="1"/>
<dbReference type="EMBL" id="CR848038">
    <property type="protein sequence ID" value="CAH64137.1"/>
    <property type="molecule type" value="Genomic_DNA"/>
</dbReference>
<dbReference type="RefSeq" id="WP_011097266.1">
    <property type="nucleotide sequence ID" value="NC_004552.2"/>
</dbReference>
<dbReference type="SMR" id="Q5L5F4"/>
<dbReference type="KEGG" id="cab:CAB690"/>
<dbReference type="eggNOG" id="COG0128">
    <property type="taxonomic scope" value="Bacteria"/>
</dbReference>
<dbReference type="HOGENOM" id="CLU_024321_0_0_0"/>
<dbReference type="OrthoDB" id="9809920at2"/>
<dbReference type="UniPathway" id="UPA00053">
    <property type="reaction ID" value="UER00089"/>
</dbReference>
<dbReference type="Proteomes" id="UP000001012">
    <property type="component" value="Chromosome"/>
</dbReference>
<dbReference type="GO" id="GO:0005737">
    <property type="term" value="C:cytoplasm"/>
    <property type="evidence" value="ECO:0007669"/>
    <property type="project" value="UniProtKB-SubCell"/>
</dbReference>
<dbReference type="GO" id="GO:0003866">
    <property type="term" value="F:3-phosphoshikimate 1-carboxyvinyltransferase activity"/>
    <property type="evidence" value="ECO:0007669"/>
    <property type="project" value="UniProtKB-UniRule"/>
</dbReference>
<dbReference type="GO" id="GO:0008652">
    <property type="term" value="P:amino acid biosynthetic process"/>
    <property type="evidence" value="ECO:0007669"/>
    <property type="project" value="UniProtKB-KW"/>
</dbReference>
<dbReference type="GO" id="GO:0009073">
    <property type="term" value="P:aromatic amino acid family biosynthetic process"/>
    <property type="evidence" value="ECO:0007669"/>
    <property type="project" value="UniProtKB-KW"/>
</dbReference>
<dbReference type="GO" id="GO:0009423">
    <property type="term" value="P:chorismate biosynthetic process"/>
    <property type="evidence" value="ECO:0007669"/>
    <property type="project" value="UniProtKB-UniRule"/>
</dbReference>
<dbReference type="CDD" id="cd01556">
    <property type="entry name" value="EPSP_synthase"/>
    <property type="match status" value="1"/>
</dbReference>
<dbReference type="Gene3D" id="3.65.10.10">
    <property type="entry name" value="Enolpyruvate transferase domain"/>
    <property type="match status" value="2"/>
</dbReference>
<dbReference type="HAMAP" id="MF_00210">
    <property type="entry name" value="EPSP_synth"/>
    <property type="match status" value="1"/>
</dbReference>
<dbReference type="InterPro" id="IPR001986">
    <property type="entry name" value="Enolpyruvate_Tfrase_dom"/>
</dbReference>
<dbReference type="InterPro" id="IPR036968">
    <property type="entry name" value="Enolpyruvate_Tfrase_sf"/>
</dbReference>
<dbReference type="InterPro" id="IPR006264">
    <property type="entry name" value="EPSP_synthase"/>
</dbReference>
<dbReference type="InterPro" id="IPR023193">
    <property type="entry name" value="EPSP_synthase_CS"/>
</dbReference>
<dbReference type="InterPro" id="IPR013792">
    <property type="entry name" value="RNA3'P_cycl/enolpyr_Trfase_a/b"/>
</dbReference>
<dbReference type="NCBIfam" id="TIGR01356">
    <property type="entry name" value="aroA"/>
    <property type="match status" value="1"/>
</dbReference>
<dbReference type="PANTHER" id="PTHR21090">
    <property type="entry name" value="AROM/DEHYDROQUINATE SYNTHASE"/>
    <property type="match status" value="1"/>
</dbReference>
<dbReference type="PANTHER" id="PTHR21090:SF5">
    <property type="entry name" value="PENTAFUNCTIONAL AROM POLYPEPTIDE"/>
    <property type="match status" value="1"/>
</dbReference>
<dbReference type="Pfam" id="PF00275">
    <property type="entry name" value="EPSP_synthase"/>
    <property type="match status" value="1"/>
</dbReference>
<dbReference type="PIRSF" id="PIRSF000505">
    <property type="entry name" value="EPSPS"/>
    <property type="match status" value="1"/>
</dbReference>
<dbReference type="SUPFAM" id="SSF55205">
    <property type="entry name" value="EPT/RTPC-like"/>
    <property type="match status" value="1"/>
</dbReference>
<dbReference type="PROSITE" id="PS00885">
    <property type="entry name" value="EPSP_SYNTHASE_2"/>
    <property type="match status" value="1"/>
</dbReference>
<name>AROA_CHLAB</name>
<organism>
    <name type="scientific">Chlamydia abortus (strain DSM 27085 / S26/3)</name>
    <name type="common">Chlamydophila abortus</name>
    <dbReference type="NCBI Taxonomy" id="218497"/>
    <lineage>
        <taxon>Bacteria</taxon>
        <taxon>Pseudomonadati</taxon>
        <taxon>Chlamydiota</taxon>
        <taxon>Chlamydiia</taxon>
        <taxon>Chlamydiales</taxon>
        <taxon>Chlamydiaceae</taxon>
        <taxon>Chlamydia/Chlamydophila group</taxon>
        <taxon>Chlamydia</taxon>
    </lineage>
</organism>